<feature type="chain" id="PRO_0000164571" description="D-aminoacyl-tRNA deacylase">
    <location>
        <begin position="1"/>
        <end position="145"/>
    </location>
</feature>
<feature type="short sequence motif" description="Gly-cisPro motif, important for rejection of L-amino acids" evidence="1">
    <location>
        <begin position="137"/>
        <end position="138"/>
    </location>
</feature>
<keyword id="KW-0963">Cytoplasm</keyword>
<keyword id="KW-0378">Hydrolase</keyword>
<keyword id="KW-1185">Reference proteome</keyword>
<keyword id="KW-0694">RNA-binding</keyword>
<keyword id="KW-0820">tRNA-binding</keyword>
<organism>
    <name type="scientific">Photobacterium profundum (strain SS9)</name>
    <dbReference type="NCBI Taxonomy" id="298386"/>
    <lineage>
        <taxon>Bacteria</taxon>
        <taxon>Pseudomonadati</taxon>
        <taxon>Pseudomonadota</taxon>
        <taxon>Gammaproteobacteria</taxon>
        <taxon>Vibrionales</taxon>
        <taxon>Vibrionaceae</taxon>
        <taxon>Photobacterium</taxon>
    </lineage>
</organism>
<reference key="1">
    <citation type="journal article" date="2005" name="Science">
        <title>Life at depth: Photobacterium profundum genome sequence and expression analysis.</title>
        <authorList>
            <person name="Vezzi A."/>
            <person name="Campanaro S."/>
            <person name="D'Angelo M."/>
            <person name="Simonato F."/>
            <person name="Vitulo N."/>
            <person name="Lauro F.M."/>
            <person name="Cestaro A."/>
            <person name="Malacrida G."/>
            <person name="Simionati B."/>
            <person name="Cannata N."/>
            <person name="Romualdi C."/>
            <person name="Bartlett D.H."/>
            <person name="Valle G."/>
        </authorList>
    </citation>
    <scope>NUCLEOTIDE SEQUENCE [LARGE SCALE GENOMIC DNA]</scope>
    <source>
        <strain>ATCC BAA-1253 / SS9</strain>
    </source>
</reference>
<dbReference type="EC" id="3.1.1.96" evidence="1"/>
<dbReference type="EMBL" id="CR378674">
    <property type="protein sequence ID" value="CAG21759.1"/>
    <property type="molecule type" value="Genomic_DNA"/>
</dbReference>
<dbReference type="RefSeq" id="WP_011220000.1">
    <property type="nucleotide sequence ID" value="NC_006370.1"/>
</dbReference>
<dbReference type="SMR" id="Q6LLR9"/>
<dbReference type="STRING" id="298386.PBPRA3488"/>
<dbReference type="KEGG" id="ppr:PBPRA3488"/>
<dbReference type="eggNOG" id="COG1490">
    <property type="taxonomic scope" value="Bacteria"/>
</dbReference>
<dbReference type="HOGENOM" id="CLU_076901_1_0_6"/>
<dbReference type="Proteomes" id="UP000000593">
    <property type="component" value="Chromosome 1"/>
</dbReference>
<dbReference type="GO" id="GO:0005737">
    <property type="term" value="C:cytoplasm"/>
    <property type="evidence" value="ECO:0007669"/>
    <property type="project" value="UniProtKB-SubCell"/>
</dbReference>
<dbReference type="GO" id="GO:0051500">
    <property type="term" value="F:D-tyrosyl-tRNA(Tyr) deacylase activity"/>
    <property type="evidence" value="ECO:0007669"/>
    <property type="project" value="TreeGrafter"/>
</dbReference>
<dbReference type="GO" id="GO:0106026">
    <property type="term" value="F:Gly-tRNA(Ala) deacylase activity"/>
    <property type="evidence" value="ECO:0007669"/>
    <property type="project" value="UniProtKB-UniRule"/>
</dbReference>
<dbReference type="GO" id="GO:0043908">
    <property type="term" value="F:Ser(Gly)-tRNA(Ala) hydrolase activity"/>
    <property type="evidence" value="ECO:0007669"/>
    <property type="project" value="UniProtKB-UniRule"/>
</dbReference>
<dbReference type="GO" id="GO:0000049">
    <property type="term" value="F:tRNA binding"/>
    <property type="evidence" value="ECO:0007669"/>
    <property type="project" value="UniProtKB-UniRule"/>
</dbReference>
<dbReference type="GO" id="GO:0019478">
    <property type="term" value="P:D-amino acid catabolic process"/>
    <property type="evidence" value="ECO:0007669"/>
    <property type="project" value="UniProtKB-UniRule"/>
</dbReference>
<dbReference type="CDD" id="cd00563">
    <property type="entry name" value="Dtyr_deacylase"/>
    <property type="match status" value="1"/>
</dbReference>
<dbReference type="FunFam" id="3.50.80.10:FF:000001">
    <property type="entry name" value="D-aminoacyl-tRNA deacylase"/>
    <property type="match status" value="1"/>
</dbReference>
<dbReference type="Gene3D" id="3.50.80.10">
    <property type="entry name" value="D-tyrosyl-tRNA(Tyr) deacylase"/>
    <property type="match status" value="1"/>
</dbReference>
<dbReference type="HAMAP" id="MF_00518">
    <property type="entry name" value="Deacylase_Dtd"/>
    <property type="match status" value="1"/>
</dbReference>
<dbReference type="InterPro" id="IPR003732">
    <property type="entry name" value="Daa-tRNA_deacyls_DTD"/>
</dbReference>
<dbReference type="InterPro" id="IPR023509">
    <property type="entry name" value="DTD-like_sf"/>
</dbReference>
<dbReference type="NCBIfam" id="TIGR00256">
    <property type="entry name" value="D-aminoacyl-tRNA deacylase"/>
    <property type="match status" value="1"/>
</dbReference>
<dbReference type="PANTHER" id="PTHR10472:SF5">
    <property type="entry name" value="D-AMINOACYL-TRNA DEACYLASE 1"/>
    <property type="match status" value="1"/>
</dbReference>
<dbReference type="PANTHER" id="PTHR10472">
    <property type="entry name" value="D-TYROSYL-TRNA TYR DEACYLASE"/>
    <property type="match status" value="1"/>
</dbReference>
<dbReference type="Pfam" id="PF02580">
    <property type="entry name" value="Tyr_Deacylase"/>
    <property type="match status" value="1"/>
</dbReference>
<dbReference type="SUPFAM" id="SSF69500">
    <property type="entry name" value="DTD-like"/>
    <property type="match status" value="1"/>
</dbReference>
<name>DTD_PHOPR</name>
<accession>Q6LLR9</accession>
<evidence type="ECO:0000255" key="1">
    <source>
        <dbReference type="HAMAP-Rule" id="MF_00518"/>
    </source>
</evidence>
<gene>
    <name evidence="1" type="primary">dtd</name>
    <name type="ordered locus">PBPRA3488</name>
</gene>
<comment type="function">
    <text evidence="1">An aminoacyl-tRNA editing enzyme that deacylates mischarged D-aminoacyl-tRNAs. Also deacylates mischarged glycyl-tRNA(Ala), protecting cells against glycine mischarging by AlaRS. Acts via tRNA-based rather than protein-based catalysis; rejects L-amino acids rather than detecting D-amino acids in the active site. By recycling D-aminoacyl-tRNA to D-amino acids and free tRNA molecules, this enzyme counteracts the toxicity associated with the formation of D-aminoacyl-tRNA entities in vivo and helps enforce protein L-homochirality.</text>
</comment>
<comment type="catalytic activity">
    <reaction evidence="1">
        <text>glycyl-tRNA(Ala) + H2O = tRNA(Ala) + glycine + H(+)</text>
        <dbReference type="Rhea" id="RHEA:53744"/>
        <dbReference type="Rhea" id="RHEA-COMP:9657"/>
        <dbReference type="Rhea" id="RHEA-COMP:13640"/>
        <dbReference type="ChEBI" id="CHEBI:15377"/>
        <dbReference type="ChEBI" id="CHEBI:15378"/>
        <dbReference type="ChEBI" id="CHEBI:57305"/>
        <dbReference type="ChEBI" id="CHEBI:78442"/>
        <dbReference type="ChEBI" id="CHEBI:78522"/>
        <dbReference type="EC" id="3.1.1.96"/>
    </reaction>
</comment>
<comment type="catalytic activity">
    <reaction evidence="1">
        <text>a D-aminoacyl-tRNA + H2O = a tRNA + a D-alpha-amino acid + H(+)</text>
        <dbReference type="Rhea" id="RHEA:13953"/>
        <dbReference type="Rhea" id="RHEA-COMP:10123"/>
        <dbReference type="Rhea" id="RHEA-COMP:10124"/>
        <dbReference type="ChEBI" id="CHEBI:15377"/>
        <dbReference type="ChEBI" id="CHEBI:15378"/>
        <dbReference type="ChEBI" id="CHEBI:59871"/>
        <dbReference type="ChEBI" id="CHEBI:78442"/>
        <dbReference type="ChEBI" id="CHEBI:79333"/>
        <dbReference type="EC" id="3.1.1.96"/>
    </reaction>
</comment>
<comment type="subunit">
    <text evidence="1">Homodimer.</text>
</comment>
<comment type="subcellular location">
    <subcellularLocation>
        <location evidence="1">Cytoplasm</location>
    </subcellularLocation>
</comment>
<comment type="domain">
    <text evidence="1">A Gly-cisPro motif from one monomer fits into the active site of the other monomer to allow specific chiral rejection of L-amino acids.</text>
</comment>
<comment type="similarity">
    <text evidence="1">Belongs to the DTD family.</text>
</comment>
<proteinExistence type="inferred from homology"/>
<sequence length="145" mass="15708">MIALIQRVSEASVTVDGQVTGTIGKGLLVLLGVEKEDDESKTKRLRDKVLGYRIFEDDAGKMNLNVQQAGGSVLVVSQFTLAADTKSGMRPSFSVGAAPADAERLYDYFVECCKDKDIQTETGIFAADMKVALLNDGPVTFWLQV</sequence>
<protein>
    <recommendedName>
        <fullName evidence="1">D-aminoacyl-tRNA deacylase</fullName>
        <shortName evidence="1">DTD</shortName>
        <ecNumber evidence="1">3.1.1.96</ecNumber>
    </recommendedName>
    <alternativeName>
        <fullName evidence="1">Gly-tRNA(Ala) deacylase</fullName>
    </alternativeName>
</protein>